<reference key="1">
    <citation type="journal article" date="2002" name="Science">
        <title>50 million years of genomic stasis in endosymbiotic bacteria.</title>
        <authorList>
            <person name="Tamas I."/>
            <person name="Klasson L."/>
            <person name="Canbaeck B."/>
            <person name="Naeslund A.K."/>
            <person name="Eriksson A.-S."/>
            <person name="Wernegreen J.J."/>
            <person name="Sandstroem J.P."/>
            <person name="Moran N.A."/>
            <person name="Andersson S.G.E."/>
        </authorList>
    </citation>
    <scope>NUCLEOTIDE SEQUENCE [LARGE SCALE GENOMIC DNA]</scope>
    <source>
        <strain>Sg</strain>
    </source>
</reference>
<dbReference type="EMBL" id="AE013218">
    <property type="protein sequence ID" value="AAM68029.1"/>
    <property type="molecule type" value="Genomic_DNA"/>
</dbReference>
<dbReference type="RefSeq" id="WP_011053995.1">
    <property type="nucleotide sequence ID" value="NC_004061.1"/>
</dbReference>
<dbReference type="SMR" id="Q8K968"/>
<dbReference type="STRING" id="198804.BUsg_486"/>
<dbReference type="GeneID" id="93003961"/>
<dbReference type="KEGG" id="bas:BUsg_486"/>
<dbReference type="eggNOG" id="COG0200">
    <property type="taxonomic scope" value="Bacteria"/>
</dbReference>
<dbReference type="HOGENOM" id="CLU_055188_4_2_6"/>
<dbReference type="Proteomes" id="UP000000416">
    <property type="component" value="Chromosome"/>
</dbReference>
<dbReference type="GO" id="GO:0022625">
    <property type="term" value="C:cytosolic large ribosomal subunit"/>
    <property type="evidence" value="ECO:0007669"/>
    <property type="project" value="TreeGrafter"/>
</dbReference>
<dbReference type="GO" id="GO:0019843">
    <property type="term" value="F:rRNA binding"/>
    <property type="evidence" value="ECO:0007669"/>
    <property type="project" value="UniProtKB-UniRule"/>
</dbReference>
<dbReference type="GO" id="GO:0003735">
    <property type="term" value="F:structural constituent of ribosome"/>
    <property type="evidence" value="ECO:0007669"/>
    <property type="project" value="InterPro"/>
</dbReference>
<dbReference type="GO" id="GO:0006412">
    <property type="term" value="P:translation"/>
    <property type="evidence" value="ECO:0007669"/>
    <property type="project" value="UniProtKB-UniRule"/>
</dbReference>
<dbReference type="Gene3D" id="3.100.10.10">
    <property type="match status" value="1"/>
</dbReference>
<dbReference type="HAMAP" id="MF_01341">
    <property type="entry name" value="Ribosomal_uL15"/>
    <property type="match status" value="1"/>
</dbReference>
<dbReference type="InterPro" id="IPR030878">
    <property type="entry name" value="Ribosomal_uL15"/>
</dbReference>
<dbReference type="InterPro" id="IPR021131">
    <property type="entry name" value="Ribosomal_uL15/eL18"/>
</dbReference>
<dbReference type="InterPro" id="IPR036227">
    <property type="entry name" value="Ribosomal_uL15/eL18_sf"/>
</dbReference>
<dbReference type="InterPro" id="IPR005749">
    <property type="entry name" value="Ribosomal_uL15_bac-type"/>
</dbReference>
<dbReference type="InterPro" id="IPR001196">
    <property type="entry name" value="Ribosomal_uL15_CS"/>
</dbReference>
<dbReference type="NCBIfam" id="TIGR01071">
    <property type="entry name" value="rplO_bact"/>
    <property type="match status" value="1"/>
</dbReference>
<dbReference type="PANTHER" id="PTHR12934">
    <property type="entry name" value="50S RIBOSOMAL PROTEIN L15"/>
    <property type="match status" value="1"/>
</dbReference>
<dbReference type="PANTHER" id="PTHR12934:SF11">
    <property type="entry name" value="LARGE RIBOSOMAL SUBUNIT PROTEIN UL15M"/>
    <property type="match status" value="1"/>
</dbReference>
<dbReference type="Pfam" id="PF00828">
    <property type="entry name" value="Ribosomal_L27A"/>
    <property type="match status" value="1"/>
</dbReference>
<dbReference type="SUPFAM" id="SSF52080">
    <property type="entry name" value="Ribosomal proteins L15p and L18e"/>
    <property type="match status" value="1"/>
</dbReference>
<dbReference type="PROSITE" id="PS00475">
    <property type="entry name" value="RIBOSOMAL_L15"/>
    <property type="match status" value="1"/>
</dbReference>
<gene>
    <name evidence="1" type="primary">rplO</name>
    <name type="ordered locus">BUsg_486</name>
</gene>
<comment type="function">
    <text evidence="1">Binds to the 23S rRNA.</text>
</comment>
<comment type="subunit">
    <text evidence="1">Part of the 50S ribosomal subunit.</text>
</comment>
<comment type="similarity">
    <text evidence="1">Belongs to the universal ribosomal protein uL15 family.</text>
</comment>
<protein>
    <recommendedName>
        <fullName evidence="1">Large ribosomal subunit protein uL15</fullName>
    </recommendedName>
    <alternativeName>
        <fullName evidence="3">50S ribosomal protein L15</fullName>
    </alternativeName>
</protein>
<evidence type="ECO:0000255" key="1">
    <source>
        <dbReference type="HAMAP-Rule" id="MF_01341"/>
    </source>
</evidence>
<evidence type="ECO:0000256" key="2">
    <source>
        <dbReference type="SAM" id="MobiDB-lite"/>
    </source>
</evidence>
<evidence type="ECO:0000305" key="3"/>
<feature type="chain" id="PRO_0000104696" description="Large ribosomal subunit protein uL15">
    <location>
        <begin position="1"/>
        <end position="144"/>
    </location>
</feature>
<feature type="region of interest" description="Disordered" evidence="2">
    <location>
        <begin position="1"/>
        <end position="51"/>
    </location>
</feature>
<feature type="compositionally biased region" description="Polar residues" evidence="2">
    <location>
        <begin position="1"/>
        <end position="12"/>
    </location>
</feature>
<feature type="compositionally biased region" description="Gly residues" evidence="2">
    <location>
        <begin position="21"/>
        <end position="31"/>
    </location>
</feature>
<organism>
    <name type="scientific">Buchnera aphidicola subsp. Schizaphis graminum (strain Sg)</name>
    <dbReference type="NCBI Taxonomy" id="198804"/>
    <lineage>
        <taxon>Bacteria</taxon>
        <taxon>Pseudomonadati</taxon>
        <taxon>Pseudomonadota</taxon>
        <taxon>Gammaproteobacteria</taxon>
        <taxon>Enterobacterales</taxon>
        <taxon>Erwiniaceae</taxon>
        <taxon>Buchnera</taxon>
    </lineage>
</organism>
<sequence>MRLNTLSPSLGSRKNHKRLGRGIGSGFGKTAGRGHKGQKSRSGGHVNRGFEGGQMPIYRRIPKFGFNSRKKNITAEVRLSDISKLSTDIIDLKVLKKENIINKNIKYVKIILSGKLEVALTLHGLRVTRGARLAIENYGGKIEG</sequence>
<keyword id="KW-0687">Ribonucleoprotein</keyword>
<keyword id="KW-0689">Ribosomal protein</keyword>
<keyword id="KW-0694">RNA-binding</keyword>
<keyword id="KW-0699">rRNA-binding</keyword>
<proteinExistence type="inferred from homology"/>
<accession>Q8K968</accession>
<name>RL15_BUCAP</name>